<reference key="1">
    <citation type="submission" date="2007-05" db="EMBL/GenBank/DDBJ databases">
        <title>Complete sequence of Pseudomonas putida F1.</title>
        <authorList>
            <consortium name="US DOE Joint Genome Institute"/>
            <person name="Copeland A."/>
            <person name="Lucas S."/>
            <person name="Lapidus A."/>
            <person name="Barry K."/>
            <person name="Detter J.C."/>
            <person name="Glavina del Rio T."/>
            <person name="Hammon N."/>
            <person name="Israni S."/>
            <person name="Dalin E."/>
            <person name="Tice H."/>
            <person name="Pitluck S."/>
            <person name="Chain P."/>
            <person name="Malfatti S."/>
            <person name="Shin M."/>
            <person name="Vergez L."/>
            <person name="Schmutz J."/>
            <person name="Larimer F."/>
            <person name="Land M."/>
            <person name="Hauser L."/>
            <person name="Kyrpides N."/>
            <person name="Lykidis A."/>
            <person name="Parales R."/>
            <person name="Richardson P."/>
        </authorList>
    </citation>
    <scope>NUCLEOTIDE SEQUENCE [LARGE SCALE GENOMIC DNA]</scope>
    <source>
        <strain>ATCC 700007 / DSM 6899 / JCM 31910 / BCRC 17059 / LMG 24140 / F1</strain>
    </source>
</reference>
<dbReference type="EMBL" id="CP000712">
    <property type="protein sequence ID" value="ABQ78975.1"/>
    <property type="molecule type" value="Genomic_DNA"/>
</dbReference>
<dbReference type="SMR" id="A5W4B5"/>
<dbReference type="KEGG" id="ppf:Pput_2843"/>
<dbReference type="eggNOG" id="COG2371">
    <property type="taxonomic scope" value="Bacteria"/>
</dbReference>
<dbReference type="HOGENOM" id="CLU_093757_2_0_6"/>
<dbReference type="GO" id="GO:0005737">
    <property type="term" value="C:cytoplasm"/>
    <property type="evidence" value="ECO:0007669"/>
    <property type="project" value="UniProtKB-SubCell"/>
</dbReference>
<dbReference type="GO" id="GO:0016151">
    <property type="term" value="F:nickel cation binding"/>
    <property type="evidence" value="ECO:0007669"/>
    <property type="project" value="UniProtKB-UniRule"/>
</dbReference>
<dbReference type="GO" id="GO:0051082">
    <property type="term" value="F:unfolded protein binding"/>
    <property type="evidence" value="ECO:0007669"/>
    <property type="project" value="UniProtKB-UniRule"/>
</dbReference>
<dbReference type="GO" id="GO:0006457">
    <property type="term" value="P:protein folding"/>
    <property type="evidence" value="ECO:0007669"/>
    <property type="project" value="InterPro"/>
</dbReference>
<dbReference type="GO" id="GO:0065003">
    <property type="term" value="P:protein-containing complex assembly"/>
    <property type="evidence" value="ECO:0007669"/>
    <property type="project" value="InterPro"/>
</dbReference>
<dbReference type="GO" id="GO:0019627">
    <property type="term" value="P:urea metabolic process"/>
    <property type="evidence" value="ECO:0007669"/>
    <property type="project" value="InterPro"/>
</dbReference>
<dbReference type="CDD" id="cd00571">
    <property type="entry name" value="UreE"/>
    <property type="match status" value="1"/>
</dbReference>
<dbReference type="Gene3D" id="2.60.260.20">
    <property type="entry name" value="Urease metallochaperone UreE, N-terminal domain"/>
    <property type="match status" value="1"/>
</dbReference>
<dbReference type="Gene3D" id="3.30.70.790">
    <property type="entry name" value="UreE, C-terminal domain"/>
    <property type="match status" value="1"/>
</dbReference>
<dbReference type="HAMAP" id="MF_00822">
    <property type="entry name" value="UreE"/>
    <property type="match status" value="1"/>
</dbReference>
<dbReference type="InterPro" id="IPR012406">
    <property type="entry name" value="UreE"/>
</dbReference>
<dbReference type="InterPro" id="IPR007864">
    <property type="entry name" value="UreE_C_dom"/>
</dbReference>
<dbReference type="InterPro" id="IPR004029">
    <property type="entry name" value="UreE_N"/>
</dbReference>
<dbReference type="InterPro" id="IPR036118">
    <property type="entry name" value="UreE_N_sf"/>
</dbReference>
<dbReference type="NCBIfam" id="NF009751">
    <property type="entry name" value="PRK13261.1-1"/>
    <property type="match status" value="1"/>
</dbReference>
<dbReference type="Pfam" id="PF05194">
    <property type="entry name" value="UreE_C"/>
    <property type="match status" value="1"/>
</dbReference>
<dbReference type="Pfam" id="PF02814">
    <property type="entry name" value="UreE_N"/>
    <property type="match status" value="1"/>
</dbReference>
<dbReference type="PIRSF" id="PIRSF036402">
    <property type="entry name" value="Ureas_acces_UreE"/>
    <property type="match status" value="1"/>
</dbReference>
<dbReference type="SMART" id="SM00988">
    <property type="entry name" value="UreE_N"/>
    <property type="match status" value="1"/>
</dbReference>
<dbReference type="SUPFAM" id="SSF69737">
    <property type="entry name" value="Urease metallochaperone UreE, C-terminal domain"/>
    <property type="match status" value="1"/>
</dbReference>
<dbReference type="SUPFAM" id="SSF69287">
    <property type="entry name" value="Urease metallochaperone UreE, N-terminal domain"/>
    <property type="match status" value="1"/>
</dbReference>
<organism>
    <name type="scientific">Pseudomonas putida (strain ATCC 700007 / DSM 6899 / JCM 31910 / BCRC 17059 / LMG 24140 / F1)</name>
    <dbReference type="NCBI Taxonomy" id="351746"/>
    <lineage>
        <taxon>Bacteria</taxon>
        <taxon>Pseudomonadati</taxon>
        <taxon>Pseudomonadota</taxon>
        <taxon>Gammaproteobacteria</taxon>
        <taxon>Pseudomonadales</taxon>
        <taxon>Pseudomonadaceae</taxon>
        <taxon>Pseudomonas</taxon>
    </lineage>
</organism>
<feature type="chain" id="PRO_1000083906" description="Urease accessory protein UreE">
    <location>
        <begin position="1"/>
        <end position="167"/>
    </location>
</feature>
<feature type="region of interest" description="Disordered" evidence="2">
    <location>
        <begin position="137"/>
        <end position="158"/>
    </location>
</feature>
<sequence length="167" mass="18227">MIVLSRRISEPGTRVVSGTVTLDVDSRIKSRLRVTLDDGREAGLMLERGHLLRGGELLADAEGTQLIRVLAAPEAVSTVRCADPHLLARAAYHLGNRHVPLQIEPGLLRFQHDHVLDDMLRGLGLTVEAEQAPFEPEAGAYQSAPHGHSHSHAHGHDHPFVRLPAHS</sequence>
<accession>A5W4B5</accession>
<comment type="function">
    <text evidence="1">Involved in urease metallocenter assembly. Binds nickel. Probably functions as a nickel donor during metallocenter assembly.</text>
</comment>
<comment type="subcellular location">
    <subcellularLocation>
        <location evidence="1">Cytoplasm</location>
    </subcellularLocation>
</comment>
<comment type="similarity">
    <text evidence="1">Belongs to the UreE family.</text>
</comment>
<protein>
    <recommendedName>
        <fullName evidence="1">Urease accessory protein UreE</fullName>
    </recommendedName>
</protein>
<keyword id="KW-0143">Chaperone</keyword>
<keyword id="KW-0963">Cytoplasm</keyword>
<keyword id="KW-0533">Nickel</keyword>
<keyword id="KW-0996">Nickel insertion</keyword>
<gene>
    <name evidence="1" type="primary">ureE</name>
    <name type="ordered locus">Pput_2843</name>
</gene>
<name>UREE_PSEP1</name>
<proteinExistence type="inferred from homology"/>
<evidence type="ECO:0000255" key="1">
    <source>
        <dbReference type="HAMAP-Rule" id="MF_00822"/>
    </source>
</evidence>
<evidence type="ECO:0000256" key="2">
    <source>
        <dbReference type="SAM" id="MobiDB-lite"/>
    </source>
</evidence>